<protein>
    <recommendedName>
        <fullName evidence="1">Large ribosomal subunit protein uL16</fullName>
    </recommendedName>
    <alternativeName>
        <fullName evidence="2">50S ribosomal protein L16</fullName>
    </alternativeName>
</protein>
<reference key="1">
    <citation type="journal article" date="2007" name="Nat. Biotechnol.">
        <title>Complete genome sequence of the myxobacterium Sorangium cellulosum.</title>
        <authorList>
            <person name="Schneiker S."/>
            <person name="Perlova O."/>
            <person name="Kaiser O."/>
            <person name="Gerth K."/>
            <person name="Alici A."/>
            <person name="Altmeyer M.O."/>
            <person name="Bartels D."/>
            <person name="Bekel T."/>
            <person name="Beyer S."/>
            <person name="Bode E."/>
            <person name="Bode H.B."/>
            <person name="Bolten C.J."/>
            <person name="Choudhuri J.V."/>
            <person name="Doss S."/>
            <person name="Elnakady Y.A."/>
            <person name="Frank B."/>
            <person name="Gaigalat L."/>
            <person name="Goesmann A."/>
            <person name="Groeger C."/>
            <person name="Gross F."/>
            <person name="Jelsbak L."/>
            <person name="Jelsbak L."/>
            <person name="Kalinowski J."/>
            <person name="Kegler C."/>
            <person name="Knauber T."/>
            <person name="Konietzny S."/>
            <person name="Kopp M."/>
            <person name="Krause L."/>
            <person name="Krug D."/>
            <person name="Linke B."/>
            <person name="Mahmud T."/>
            <person name="Martinez-Arias R."/>
            <person name="McHardy A.C."/>
            <person name="Merai M."/>
            <person name="Meyer F."/>
            <person name="Mormann S."/>
            <person name="Munoz-Dorado J."/>
            <person name="Perez J."/>
            <person name="Pradella S."/>
            <person name="Rachid S."/>
            <person name="Raddatz G."/>
            <person name="Rosenau F."/>
            <person name="Rueckert C."/>
            <person name="Sasse F."/>
            <person name="Scharfe M."/>
            <person name="Schuster S.C."/>
            <person name="Suen G."/>
            <person name="Treuner-Lange A."/>
            <person name="Velicer G.J."/>
            <person name="Vorholter F.-J."/>
            <person name="Weissman K.J."/>
            <person name="Welch R.D."/>
            <person name="Wenzel S.C."/>
            <person name="Whitworth D.E."/>
            <person name="Wilhelm S."/>
            <person name="Wittmann C."/>
            <person name="Bloecker H."/>
            <person name="Puehler A."/>
            <person name="Mueller R."/>
        </authorList>
    </citation>
    <scope>NUCLEOTIDE SEQUENCE [LARGE SCALE GENOMIC DNA]</scope>
    <source>
        <strain>So ce56</strain>
    </source>
</reference>
<sequence length="137" mass="15359">MLSPKRTKFRKMQKGNNRGLAMTGSDVSFGDFALQCVEPARVTSRQIEAARMAIQRHVKRAGKLWIRIFPDRPVTKKPLEVRMGGGKGAPEEWCALVQPGRVMYEISGVSEETAKEAFRLASHKLPMQCKFLARGLT</sequence>
<feature type="chain" id="PRO_1000086780" description="Large ribosomal subunit protein uL16">
    <location>
        <begin position="1"/>
        <end position="137"/>
    </location>
</feature>
<accession>A9FGJ3</accession>
<comment type="function">
    <text evidence="1">Binds 23S rRNA and is also seen to make contacts with the A and possibly P site tRNAs.</text>
</comment>
<comment type="subunit">
    <text evidence="1">Part of the 50S ribosomal subunit.</text>
</comment>
<comment type="similarity">
    <text evidence="1">Belongs to the universal ribosomal protein uL16 family.</text>
</comment>
<organism>
    <name type="scientific">Sorangium cellulosum (strain So ce56)</name>
    <name type="common">Polyangium cellulosum (strain So ce56)</name>
    <dbReference type="NCBI Taxonomy" id="448385"/>
    <lineage>
        <taxon>Bacteria</taxon>
        <taxon>Pseudomonadati</taxon>
        <taxon>Myxococcota</taxon>
        <taxon>Polyangia</taxon>
        <taxon>Polyangiales</taxon>
        <taxon>Polyangiaceae</taxon>
        <taxon>Sorangium</taxon>
    </lineage>
</organism>
<evidence type="ECO:0000255" key="1">
    <source>
        <dbReference type="HAMAP-Rule" id="MF_01342"/>
    </source>
</evidence>
<evidence type="ECO:0000305" key="2"/>
<gene>
    <name evidence="1" type="primary">rplP</name>
    <name type="ordered locus">sce7956</name>
</gene>
<dbReference type="EMBL" id="AM746676">
    <property type="protein sequence ID" value="CAN98126.1"/>
    <property type="molecule type" value="Genomic_DNA"/>
</dbReference>
<dbReference type="RefSeq" id="WP_012240565.1">
    <property type="nucleotide sequence ID" value="NC_010162.1"/>
</dbReference>
<dbReference type="SMR" id="A9FGJ3"/>
<dbReference type="STRING" id="448385.sce7956"/>
<dbReference type="KEGG" id="scl:sce7956"/>
<dbReference type="eggNOG" id="COG0197">
    <property type="taxonomic scope" value="Bacteria"/>
</dbReference>
<dbReference type="HOGENOM" id="CLU_078858_2_1_7"/>
<dbReference type="OrthoDB" id="9802589at2"/>
<dbReference type="BioCyc" id="SCEL448385:SCE_RS40720-MONOMER"/>
<dbReference type="Proteomes" id="UP000002139">
    <property type="component" value="Chromosome"/>
</dbReference>
<dbReference type="GO" id="GO:0022625">
    <property type="term" value="C:cytosolic large ribosomal subunit"/>
    <property type="evidence" value="ECO:0007669"/>
    <property type="project" value="TreeGrafter"/>
</dbReference>
<dbReference type="GO" id="GO:0019843">
    <property type="term" value="F:rRNA binding"/>
    <property type="evidence" value="ECO:0007669"/>
    <property type="project" value="UniProtKB-UniRule"/>
</dbReference>
<dbReference type="GO" id="GO:0003735">
    <property type="term" value="F:structural constituent of ribosome"/>
    <property type="evidence" value="ECO:0007669"/>
    <property type="project" value="InterPro"/>
</dbReference>
<dbReference type="GO" id="GO:0000049">
    <property type="term" value="F:tRNA binding"/>
    <property type="evidence" value="ECO:0007669"/>
    <property type="project" value="UniProtKB-KW"/>
</dbReference>
<dbReference type="GO" id="GO:0006412">
    <property type="term" value="P:translation"/>
    <property type="evidence" value="ECO:0007669"/>
    <property type="project" value="UniProtKB-UniRule"/>
</dbReference>
<dbReference type="CDD" id="cd01433">
    <property type="entry name" value="Ribosomal_L16_L10e"/>
    <property type="match status" value="1"/>
</dbReference>
<dbReference type="FunFam" id="3.90.1170.10:FF:000001">
    <property type="entry name" value="50S ribosomal protein L16"/>
    <property type="match status" value="1"/>
</dbReference>
<dbReference type="Gene3D" id="3.90.1170.10">
    <property type="entry name" value="Ribosomal protein L10e/L16"/>
    <property type="match status" value="1"/>
</dbReference>
<dbReference type="HAMAP" id="MF_01342">
    <property type="entry name" value="Ribosomal_uL16"/>
    <property type="match status" value="1"/>
</dbReference>
<dbReference type="InterPro" id="IPR047873">
    <property type="entry name" value="Ribosomal_uL16"/>
</dbReference>
<dbReference type="InterPro" id="IPR000114">
    <property type="entry name" value="Ribosomal_uL16_bact-type"/>
</dbReference>
<dbReference type="InterPro" id="IPR020798">
    <property type="entry name" value="Ribosomal_uL16_CS"/>
</dbReference>
<dbReference type="InterPro" id="IPR016180">
    <property type="entry name" value="Ribosomal_uL16_dom"/>
</dbReference>
<dbReference type="InterPro" id="IPR036920">
    <property type="entry name" value="Ribosomal_uL16_sf"/>
</dbReference>
<dbReference type="NCBIfam" id="TIGR01164">
    <property type="entry name" value="rplP_bact"/>
    <property type="match status" value="1"/>
</dbReference>
<dbReference type="PANTHER" id="PTHR12220">
    <property type="entry name" value="50S/60S RIBOSOMAL PROTEIN L16"/>
    <property type="match status" value="1"/>
</dbReference>
<dbReference type="PANTHER" id="PTHR12220:SF13">
    <property type="entry name" value="LARGE RIBOSOMAL SUBUNIT PROTEIN UL16M"/>
    <property type="match status" value="1"/>
</dbReference>
<dbReference type="Pfam" id="PF00252">
    <property type="entry name" value="Ribosomal_L16"/>
    <property type="match status" value="1"/>
</dbReference>
<dbReference type="PRINTS" id="PR00060">
    <property type="entry name" value="RIBOSOMALL16"/>
</dbReference>
<dbReference type="SUPFAM" id="SSF54686">
    <property type="entry name" value="Ribosomal protein L16p/L10e"/>
    <property type="match status" value="1"/>
</dbReference>
<dbReference type="PROSITE" id="PS00586">
    <property type="entry name" value="RIBOSOMAL_L16_1"/>
    <property type="match status" value="1"/>
</dbReference>
<dbReference type="PROSITE" id="PS00701">
    <property type="entry name" value="RIBOSOMAL_L16_2"/>
    <property type="match status" value="1"/>
</dbReference>
<keyword id="KW-1185">Reference proteome</keyword>
<keyword id="KW-0687">Ribonucleoprotein</keyword>
<keyword id="KW-0689">Ribosomal protein</keyword>
<keyword id="KW-0694">RNA-binding</keyword>
<keyword id="KW-0699">rRNA-binding</keyword>
<keyword id="KW-0820">tRNA-binding</keyword>
<proteinExistence type="inferred from homology"/>
<name>RL16_SORC5</name>